<reference key="1">
    <citation type="journal article" date="2008" name="BMC Genomics">
        <title>The linear chromosome of the plant-pathogenic mycoplasma 'Candidatus Phytoplasma mali'.</title>
        <authorList>
            <person name="Kube M."/>
            <person name="Schneider B."/>
            <person name="Kuhl H."/>
            <person name="Dandekar T."/>
            <person name="Heitmann K."/>
            <person name="Migdoll A.M."/>
            <person name="Reinhardt R."/>
            <person name="Seemueller E."/>
        </authorList>
    </citation>
    <scope>NUCLEOTIDE SEQUENCE [LARGE SCALE GENOMIC DNA]</scope>
    <source>
        <strain>AT</strain>
    </source>
</reference>
<evidence type="ECO:0000255" key="1">
    <source>
        <dbReference type="HAMAP-Rule" id="MF_00358"/>
    </source>
</evidence>
<evidence type="ECO:0000305" key="2"/>
<dbReference type="EMBL" id="CU469464">
    <property type="protein sequence ID" value="CAP18487.1"/>
    <property type="molecule type" value="Genomic_DNA"/>
</dbReference>
<dbReference type="SMR" id="B3QZV0"/>
<dbReference type="STRING" id="37692.ATP_00300"/>
<dbReference type="KEGG" id="pml:ATP_00300"/>
<dbReference type="eggNOG" id="COG0828">
    <property type="taxonomic scope" value="Bacteria"/>
</dbReference>
<dbReference type="HOGENOM" id="CLU_159258_3_2_14"/>
<dbReference type="Proteomes" id="UP000002020">
    <property type="component" value="Chromosome"/>
</dbReference>
<dbReference type="GO" id="GO:1990904">
    <property type="term" value="C:ribonucleoprotein complex"/>
    <property type="evidence" value="ECO:0007669"/>
    <property type="project" value="UniProtKB-KW"/>
</dbReference>
<dbReference type="GO" id="GO:0005840">
    <property type="term" value="C:ribosome"/>
    <property type="evidence" value="ECO:0007669"/>
    <property type="project" value="UniProtKB-KW"/>
</dbReference>
<dbReference type="GO" id="GO:0003735">
    <property type="term" value="F:structural constituent of ribosome"/>
    <property type="evidence" value="ECO:0007669"/>
    <property type="project" value="InterPro"/>
</dbReference>
<dbReference type="GO" id="GO:0006412">
    <property type="term" value="P:translation"/>
    <property type="evidence" value="ECO:0007669"/>
    <property type="project" value="UniProtKB-UniRule"/>
</dbReference>
<dbReference type="Gene3D" id="1.20.5.1150">
    <property type="entry name" value="Ribosomal protein S8"/>
    <property type="match status" value="1"/>
</dbReference>
<dbReference type="HAMAP" id="MF_00358">
    <property type="entry name" value="Ribosomal_bS21"/>
    <property type="match status" value="1"/>
</dbReference>
<dbReference type="InterPro" id="IPR001911">
    <property type="entry name" value="Ribosomal_bS21"/>
</dbReference>
<dbReference type="InterPro" id="IPR038380">
    <property type="entry name" value="Ribosomal_bS21_sf"/>
</dbReference>
<dbReference type="NCBIfam" id="TIGR00030">
    <property type="entry name" value="S21p"/>
    <property type="match status" value="1"/>
</dbReference>
<dbReference type="Pfam" id="PF01165">
    <property type="entry name" value="Ribosomal_S21"/>
    <property type="match status" value="1"/>
</dbReference>
<dbReference type="PRINTS" id="PR00976">
    <property type="entry name" value="RIBOSOMALS21"/>
</dbReference>
<proteinExistence type="inferred from homology"/>
<organism>
    <name type="scientific">Phytoplasma mali (strain AT)</name>
    <dbReference type="NCBI Taxonomy" id="482235"/>
    <lineage>
        <taxon>Bacteria</taxon>
        <taxon>Bacillati</taxon>
        <taxon>Mycoplasmatota</taxon>
        <taxon>Mollicutes</taxon>
        <taxon>Acholeplasmatales</taxon>
        <taxon>Acholeplasmataceae</taxon>
        <taxon>Candidatus Phytoplasma</taxon>
        <taxon>16SrX (Apple proliferation group)</taxon>
    </lineage>
</organism>
<keyword id="KW-1185">Reference proteome</keyword>
<keyword id="KW-0687">Ribonucleoprotein</keyword>
<keyword id="KW-0689">Ribosomal protein</keyword>
<sequence>MPKTIVREEETIEETLRRFKREVSKSGNLAAARKKEYYIKPSVEKKNRRNKMSLR</sequence>
<gene>
    <name evidence="1" type="primary">rpsU</name>
    <name type="ordered locus">ATP_00300</name>
</gene>
<protein>
    <recommendedName>
        <fullName evidence="1">Small ribosomal subunit protein bS21</fullName>
    </recommendedName>
    <alternativeName>
        <fullName evidence="2">30S ribosomal protein S21</fullName>
    </alternativeName>
</protein>
<feature type="chain" id="PRO_1000133484" description="Small ribosomal subunit protein bS21">
    <location>
        <begin position="1"/>
        <end position="55"/>
    </location>
</feature>
<accession>B3QZV0</accession>
<name>RS21_PHYMT</name>
<comment type="similarity">
    <text evidence="1">Belongs to the bacterial ribosomal protein bS21 family.</text>
</comment>